<organism>
    <name type="scientific">Guillardia theta</name>
    <name type="common">Cryptophyte</name>
    <name type="synonym">Cryptomonas phi</name>
    <dbReference type="NCBI Taxonomy" id="55529"/>
    <lineage>
        <taxon>Eukaryota</taxon>
        <taxon>Cryptophyceae</taxon>
        <taxon>Pyrenomonadales</taxon>
        <taxon>Geminigeraceae</taxon>
        <taxon>Guillardia</taxon>
    </lineage>
</organism>
<proteinExistence type="inferred from homology"/>
<protein>
    <recommendedName>
        <fullName evidence="2">Small ribosomal subunit protein uS19c</fullName>
    </recommendedName>
    <alternativeName>
        <fullName>30S ribosomal protein S19, chloroplastic</fullName>
    </alternativeName>
</protein>
<evidence type="ECO:0000250" key="1"/>
<evidence type="ECO:0000305" key="2"/>
<feature type="chain" id="PRO_0000129965" description="Small ribosomal subunit protein uS19c">
    <location>
        <begin position="1"/>
        <end position="92"/>
    </location>
</feature>
<name>RR19_GUITH</name>
<sequence length="92" mass="10318">MSRSLSKGPYIAAHLLKKLNNVDIQKPDVVIKTWSRSSTILPNMVGATIAVYNGKQHVPVYISDQMVGHKLGEFSPTRTFRSHIKSDKKAKR</sequence>
<comment type="function">
    <text evidence="1">Protein S19 forms a complex with S13 that binds strongly to the 16S ribosomal RNA.</text>
</comment>
<comment type="subcellular location">
    <subcellularLocation>
        <location>Plastid</location>
        <location>Chloroplast</location>
    </subcellularLocation>
</comment>
<comment type="similarity">
    <text evidence="2">Belongs to the universal ribosomal protein uS19 family.</text>
</comment>
<geneLocation type="chloroplast"/>
<dbReference type="EMBL" id="AF041468">
    <property type="protein sequence ID" value="AAC35707.1"/>
    <property type="molecule type" value="Genomic_DNA"/>
</dbReference>
<dbReference type="RefSeq" id="NP_050773.1">
    <property type="nucleotide sequence ID" value="NC_000926.1"/>
</dbReference>
<dbReference type="SMR" id="O46898"/>
<dbReference type="GeneID" id="857081"/>
<dbReference type="HOGENOM" id="CLU_144911_0_1_1"/>
<dbReference type="OMA" id="KGPFVDP"/>
<dbReference type="GO" id="GO:0009507">
    <property type="term" value="C:chloroplast"/>
    <property type="evidence" value="ECO:0007669"/>
    <property type="project" value="UniProtKB-SubCell"/>
</dbReference>
<dbReference type="GO" id="GO:0005763">
    <property type="term" value="C:mitochondrial small ribosomal subunit"/>
    <property type="evidence" value="ECO:0007669"/>
    <property type="project" value="TreeGrafter"/>
</dbReference>
<dbReference type="GO" id="GO:0019843">
    <property type="term" value="F:rRNA binding"/>
    <property type="evidence" value="ECO:0007669"/>
    <property type="project" value="UniProtKB-UniRule"/>
</dbReference>
<dbReference type="GO" id="GO:0003735">
    <property type="term" value="F:structural constituent of ribosome"/>
    <property type="evidence" value="ECO:0007669"/>
    <property type="project" value="InterPro"/>
</dbReference>
<dbReference type="GO" id="GO:0000028">
    <property type="term" value="P:ribosomal small subunit assembly"/>
    <property type="evidence" value="ECO:0007669"/>
    <property type="project" value="TreeGrafter"/>
</dbReference>
<dbReference type="GO" id="GO:0006412">
    <property type="term" value="P:translation"/>
    <property type="evidence" value="ECO:0007669"/>
    <property type="project" value="UniProtKB-UniRule"/>
</dbReference>
<dbReference type="FunFam" id="3.30.860.10:FF:000001">
    <property type="entry name" value="30S ribosomal protein S19"/>
    <property type="match status" value="1"/>
</dbReference>
<dbReference type="Gene3D" id="3.30.860.10">
    <property type="entry name" value="30s Ribosomal Protein S19, Chain A"/>
    <property type="match status" value="1"/>
</dbReference>
<dbReference type="HAMAP" id="MF_00531">
    <property type="entry name" value="Ribosomal_uS19"/>
    <property type="match status" value="1"/>
</dbReference>
<dbReference type="InterPro" id="IPR002222">
    <property type="entry name" value="Ribosomal_uS19"/>
</dbReference>
<dbReference type="InterPro" id="IPR005732">
    <property type="entry name" value="Ribosomal_uS19_bac-type"/>
</dbReference>
<dbReference type="InterPro" id="IPR020934">
    <property type="entry name" value="Ribosomal_uS19_CS"/>
</dbReference>
<dbReference type="InterPro" id="IPR023575">
    <property type="entry name" value="Ribosomal_uS19_SF"/>
</dbReference>
<dbReference type="NCBIfam" id="TIGR01050">
    <property type="entry name" value="rpsS_bact"/>
    <property type="match status" value="1"/>
</dbReference>
<dbReference type="PANTHER" id="PTHR11880">
    <property type="entry name" value="RIBOSOMAL PROTEIN S19P FAMILY MEMBER"/>
    <property type="match status" value="1"/>
</dbReference>
<dbReference type="PANTHER" id="PTHR11880:SF8">
    <property type="entry name" value="SMALL RIBOSOMAL SUBUNIT PROTEIN US19M"/>
    <property type="match status" value="1"/>
</dbReference>
<dbReference type="Pfam" id="PF00203">
    <property type="entry name" value="Ribosomal_S19"/>
    <property type="match status" value="1"/>
</dbReference>
<dbReference type="PIRSF" id="PIRSF002144">
    <property type="entry name" value="Ribosomal_S19"/>
    <property type="match status" value="1"/>
</dbReference>
<dbReference type="PRINTS" id="PR00975">
    <property type="entry name" value="RIBOSOMALS19"/>
</dbReference>
<dbReference type="SUPFAM" id="SSF54570">
    <property type="entry name" value="Ribosomal protein S19"/>
    <property type="match status" value="1"/>
</dbReference>
<dbReference type="PROSITE" id="PS00323">
    <property type="entry name" value="RIBOSOMAL_S19"/>
    <property type="match status" value="1"/>
</dbReference>
<keyword id="KW-0150">Chloroplast</keyword>
<keyword id="KW-0934">Plastid</keyword>
<keyword id="KW-0687">Ribonucleoprotein</keyword>
<keyword id="KW-0689">Ribosomal protein</keyword>
<keyword id="KW-0694">RNA-binding</keyword>
<keyword id="KW-0699">rRNA-binding</keyword>
<reference key="1">
    <citation type="journal article" date="1997" name="Biochem. Mol. Biol. Int.">
        <title>The large ribosomal protein gene cluster of a cryptomonad plastid: gene organization, sequence and evolutionary implications.</title>
        <authorList>
            <person name="Wang S.L."/>
            <person name="Liu X.-Q."/>
            <person name="Douglas S.E."/>
        </authorList>
    </citation>
    <scope>NUCLEOTIDE SEQUENCE [GENOMIC DNA]</scope>
</reference>
<reference key="2">
    <citation type="journal article" date="1999" name="J. Mol. Evol.">
        <title>The plastid genome of the cryptophyte alga, Guillardia theta: complete sequence and conserved synteny groups confirm its common ancestry with red algae.</title>
        <authorList>
            <person name="Douglas S.E."/>
            <person name="Penny S.L."/>
        </authorList>
    </citation>
    <scope>NUCLEOTIDE SEQUENCE [LARGE SCALE GENOMIC DNA]</scope>
</reference>
<accession>O46898</accession>
<gene>
    <name type="primary">rps19</name>
</gene>